<accession>Q8Y3P1</accession>
<evidence type="ECO:0000255" key="1">
    <source>
        <dbReference type="HAMAP-Rule" id="MF_02015"/>
    </source>
</evidence>
<sequence length="284" mass="32806">MPFSRLFGKKEKNQMDDIVEEGVQRVQELPMDKIFPNQFQPRTVFDQDKIDELARTIRIHGVIQPIVVREMEPDYYEIIAGERRFRAVLSLEMEKIPAIIQNLDDEEVAAIALIENLQREELTPIEEAKAYRSLLDMQDVTQEALAQRVGKSQSAIANKMRLLKLPETVQEAVLIKQISERHARSLLALETEEQQVALLAEIAENHWNVKQTEARIQEILGVKKQVATKKTKPKRQAISRDVRIAMNTIKQSVTMVKDNGMDLDFTEEETDDFYQITIQIPKKK</sequence>
<comment type="function">
    <text evidence="1">Effects nucleoid occlusion by binding relatively nonspecifically to DNA and preventing the assembly of the division machinery in the vicinity of the nucleoid, especially under conditions that disturb the cell cycle. It helps to coordinate cell division and chromosome segregation by preventing the formation of the Z ring through the nucleoid, which would cause chromosome breakage.</text>
</comment>
<comment type="subcellular location">
    <subcellularLocation>
        <location evidence="1">Cytoplasm</location>
        <location evidence="1">Nucleoid</location>
    </subcellularLocation>
</comment>
<comment type="similarity">
    <text evidence="1">Belongs to the ParB family.</text>
</comment>
<reference key="1">
    <citation type="journal article" date="2001" name="Science">
        <title>Comparative genomics of Listeria species.</title>
        <authorList>
            <person name="Glaser P."/>
            <person name="Frangeul L."/>
            <person name="Buchrieser C."/>
            <person name="Rusniok C."/>
            <person name="Amend A."/>
            <person name="Baquero F."/>
            <person name="Berche P."/>
            <person name="Bloecker H."/>
            <person name="Brandt P."/>
            <person name="Chakraborty T."/>
            <person name="Charbit A."/>
            <person name="Chetouani F."/>
            <person name="Couve E."/>
            <person name="de Daruvar A."/>
            <person name="Dehoux P."/>
            <person name="Domann E."/>
            <person name="Dominguez-Bernal G."/>
            <person name="Duchaud E."/>
            <person name="Durant L."/>
            <person name="Dussurget O."/>
            <person name="Entian K.-D."/>
            <person name="Fsihi H."/>
            <person name="Garcia-del Portillo F."/>
            <person name="Garrido P."/>
            <person name="Gautier L."/>
            <person name="Goebel W."/>
            <person name="Gomez-Lopez N."/>
            <person name="Hain T."/>
            <person name="Hauf J."/>
            <person name="Jackson D."/>
            <person name="Jones L.-M."/>
            <person name="Kaerst U."/>
            <person name="Kreft J."/>
            <person name="Kuhn M."/>
            <person name="Kunst F."/>
            <person name="Kurapkat G."/>
            <person name="Madueno E."/>
            <person name="Maitournam A."/>
            <person name="Mata Vicente J."/>
            <person name="Ng E."/>
            <person name="Nedjari H."/>
            <person name="Nordsiek G."/>
            <person name="Novella S."/>
            <person name="de Pablos B."/>
            <person name="Perez-Diaz J.-C."/>
            <person name="Purcell R."/>
            <person name="Remmel B."/>
            <person name="Rose M."/>
            <person name="Schlueter T."/>
            <person name="Simoes N."/>
            <person name="Tierrez A."/>
            <person name="Vazquez-Boland J.-A."/>
            <person name="Voss H."/>
            <person name="Wehland J."/>
            <person name="Cossart P."/>
        </authorList>
    </citation>
    <scope>NUCLEOTIDE SEQUENCE [LARGE SCALE GENOMIC DNA]</scope>
    <source>
        <strain>ATCC BAA-679 / EGD-e</strain>
    </source>
</reference>
<feature type="chain" id="PRO_0000346632" description="Nucleoid occlusion protein">
    <location>
        <begin position="1"/>
        <end position="284"/>
    </location>
</feature>
<feature type="DNA-binding region" description="H-T-H motif" evidence="1">
    <location>
        <begin position="143"/>
        <end position="162"/>
    </location>
</feature>
<keyword id="KW-0131">Cell cycle</keyword>
<keyword id="KW-0132">Cell division</keyword>
<keyword id="KW-0963">Cytoplasm</keyword>
<keyword id="KW-0238">DNA-binding</keyword>
<keyword id="KW-1185">Reference proteome</keyword>
<keyword id="KW-0717">Septation</keyword>
<proteinExistence type="inferred from homology"/>
<organism>
    <name type="scientific">Listeria monocytogenes serovar 1/2a (strain ATCC BAA-679 / EGD-e)</name>
    <dbReference type="NCBI Taxonomy" id="169963"/>
    <lineage>
        <taxon>Bacteria</taxon>
        <taxon>Bacillati</taxon>
        <taxon>Bacillota</taxon>
        <taxon>Bacilli</taxon>
        <taxon>Bacillales</taxon>
        <taxon>Listeriaceae</taxon>
        <taxon>Listeria</taxon>
    </lineage>
</organism>
<dbReference type="EMBL" id="AL591984">
    <property type="protein sequence ID" value="CAD01007.1"/>
    <property type="molecule type" value="Genomic_DNA"/>
</dbReference>
<dbReference type="PIR" id="AI1423">
    <property type="entry name" value="AI1423"/>
</dbReference>
<dbReference type="RefSeq" id="NP_466316.1">
    <property type="nucleotide sequence ID" value="NC_003210.1"/>
</dbReference>
<dbReference type="RefSeq" id="WP_010990072.1">
    <property type="nucleotide sequence ID" value="NZ_CP149495.1"/>
</dbReference>
<dbReference type="SMR" id="Q8Y3P1"/>
<dbReference type="STRING" id="169963.gene:17595511"/>
<dbReference type="PaxDb" id="169963-lmo2794"/>
<dbReference type="EnsemblBacteria" id="CAD01007">
    <property type="protein sequence ID" value="CAD01007"/>
    <property type="gene ID" value="CAD01007"/>
</dbReference>
<dbReference type="GeneID" id="986747"/>
<dbReference type="KEGG" id="lmo:lmo2794"/>
<dbReference type="PATRIC" id="fig|169963.11.peg.2864"/>
<dbReference type="eggNOG" id="COG1475">
    <property type="taxonomic scope" value="Bacteria"/>
</dbReference>
<dbReference type="HOGENOM" id="CLU_023853_0_1_9"/>
<dbReference type="OrthoDB" id="9802051at2"/>
<dbReference type="PhylomeDB" id="Q8Y3P1"/>
<dbReference type="BioCyc" id="LMON169963:LMO2794-MONOMER"/>
<dbReference type="Proteomes" id="UP000000817">
    <property type="component" value="Chromosome"/>
</dbReference>
<dbReference type="GO" id="GO:0005694">
    <property type="term" value="C:chromosome"/>
    <property type="evidence" value="ECO:0000318"/>
    <property type="project" value="GO_Central"/>
</dbReference>
<dbReference type="GO" id="GO:0005737">
    <property type="term" value="C:cytoplasm"/>
    <property type="evidence" value="ECO:0007669"/>
    <property type="project" value="UniProtKB-UniRule"/>
</dbReference>
<dbReference type="GO" id="GO:0009295">
    <property type="term" value="C:nucleoid"/>
    <property type="evidence" value="ECO:0007669"/>
    <property type="project" value="UniProtKB-SubCell"/>
</dbReference>
<dbReference type="GO" id="GO:0003677">
    <property type="term" value="F:DNA binding"/>
    <property type="evidence" value="ECO:0007669"/>
    <property type="project" value="UniProtKB-UniRule"/>
</dbReference>
<dbReference type="GO" id="GO:0007059">
    <property type="term" value="P:chromosome segregation"/>
    <property type="evidence" value="ECO:0000318"/>
    <property type="project" value="GO_Central"/>
</dbReference>
<dbReference type="GO" id="GO:0000917">
    <property type="term" value="P:division septum assembly"/>
    <property type="evidence" value="ECO:0007669"/>
    <property type="project" value="UniProtKB-KW"/>
</dbReference>
<dbReference type="GO" id="GO:0045881">
    <property type="term" value="P:positive regulation of sporulation resulting in formation of a cellular spore"/>
    <property type="evidence" value="ECO:0000318"/>
    <property type="project" value="GO_Central"/>
</dbReference>
<dbReference type="CDD" id="cd16393">
    <property type="entry name" value="SPO0J_N"/>
    <property type="match status" value="1"/>
</dbReference>
<dbReference type="FunFam" id="1.10.10.2830:FF:000001">
    <property type="entry name" value="Chromosome partitioning protein ParB"/>
    <property type="match status" value="1"/>
</dbReference>
<dbReference type="FunFam" id="3.90.1530.30:FF:000001">
    <property type="entry name" value="Chromosome partitioning protein ParB"/>
    <property type="match status" value="1"/>
</dbReference>
<dbReference type="Gene3D" id="1.10.10.2830">
    <property type="match status" value="1"/>
</dbReference>
<dbReference type="Gene3D" id="3.90.1530.30">
    <property type="match status" value="1"/>
</dbReference>
<dbReference type="HAMAP" id="MF_02015">
    <property type="entry name" value="ParB_Noc"/>
    <property type="match status" value="1"/>
</dbReference>
<dbReference type="InterPro" id="IPR050336">
    <property type="entry name" value="Chromosome_partition/occlusion"/>
</dbReference>
<dbReference type="InterPro" id="IPR041468">
    <property type="entry name" value="HTH_ParB/Spo0J"/>
</dbReference>
<dbReference type="InterPro" id="IPR023705">
    <property type="entry name" value="Nucleoid_occlusion_protein"/>
</dbReference>
<dbReference type="InterPro" id="IPR004437">
    <property type="entry name" value="ParB/RepB/Spo0J"/>
</dbReference>
<dbReference type="InterPro" id="IPR003115">
    <property type="entry name" value="ParB/Sulfiredoxin_dom"/>
</dbReference>
<dbReference type="InterPro" id="IPR036086">
    <property type="entry name" value="ParB/Sulfiredoxin_sf"/>
</dbReference>
<dbReference type="NCBIfam" id="TIGR04285">
    <property type="entry name" value="nucleoid_noc"/>
    <property type="match status" value="1"/>
</dbReference>
<dbReference type="NCBIfam" id="TIGR00180">
    <property type="entry name" value="parB_part"/>
    <property type="match status" value="1"/>
</dbReference>
<dbReference type="PANTHER" id="PTHR33375">
    <property type="entry name" value="CHROMOSOME-PARTITIONING PROTEIN PARB-RELATED"/>
    <property type="match status" value="1"/>
</dbReference>
<dbReference type="PANTHER" id="PTHR33375:SF8">
    <property type="entry name" value="NUCLEOID OCCLUSION PROTEIN"/>
    <property type="match status" value="1"/>
</dbReference>
<dbReference type="Pfam" id="PF17762">
    <property type="entry name" value="HTH_ParB"/>
    <property type="match status" value="1"/>
</dbReference>
<dbReference type="Pfam" id="PF02195">
    <property type="entry name" value="ParBc"/>
    <property type="match status" value="1"/>
</dbReference>
<dbReference type="SMART" id="SM00470">
    <property type="entry name" value="ParB"/>
    <property type="match status" value="1"/>
</dbReference>
<dbReference type="SUPFAM" id="SSF110849">
    <property type="entry name" value="ParB/Sulfiredoxin"/>
    <property type="match status" value="1"/>
</dbReference>
<protein>
    <recommendedName>
        <fullName evidence="1">Nucleoid occlusion protein</fullName>
        <shortName evidence="1">Noc</shortName>
    </recommendedName>
</protein>
<name>NOC_LISMO</name>
<gene>
    <name evidence="1" type="primary">noc</name>
    <name type="ordered locus">lmo2794</name>
</gene>